<evidence type="ECO:0000250" key="1">
    <source>
        <dbReference type="UniProtKB" id="Q02936"/>
    </source>
</evidence>
<evidence type="ECO:0000250" key="2">
    <source>
        <dbReference type="UniProtKB" id="Q15465"/>
    </source>
</evidence>
<evidence type="ECO:0000250" key="3">
    <source>
        <dbReference type="UniProtKB" id="Q62226"/>
    </source>
</evidence>
<evidence type="ECO:0000255" key="4"/>
<evidence type="ECO:0000312" key="5">
    <source>
        <dbReference type="EMBL" id="EAL27441.2"/>
    </source>
</evidence>
<accession>Q29AA9</accession>
<reference evidence="5" key="1">
    <citation type="journal article" date="2005" name="Genome Res.">
        <title>Comparative genome sequencing of Drosophila pseudoobscura: chromosomal, gene, and cis-element evolution.</title>
        <authorList>
            <person name="Richards S."/>
            <person name="Liu Y."/>
            <person name="Bettencourt B.R."/>
            <person name="Hradecky P."/>
            <person name="Letovsky S."/>
            <person name="Nielsen R."/>
            <person name="Thornton K."/>
            <person name="Hubisz M.J."/>
            <person name="Chen R."/>
            <person name="Meisel R.P."/>
            <person name="Couronne O."/>
            <person name="Hua S."/>
            <person name="Smith M.A."/>
            <person name="Zhang P."/>
            <person name="Liu J."/>
            <person name="Bussemaker H.J."/>
            <person name="van Batenburg M.F."/>
            <person name="Howells S.L."/>
            <person name="Scherer S.E."/>
            <person name="Sodergren E."/>
            <person name="Matthews B.B."/>
            <person name="Crosby M.A."/>
            <person name="Schroeder A.J."/>
            <person name="Ortiz-Barrientos D."/>
            <person name="Rives C.M."/>
            <person name="Metzker M.L."/>
            <person name="Muzny D.M."/>
            <person name="Scott G."/>
            <person name="Steffen D."/>
            <person name="Wheeler D.A."/>
            <person name="Worley K.C."/>
            <person name="Havlak P."/>
            <person name="Durbin K.J."/>
            <person name="Egan A."/>
            <person name="Gill R."/>
            <person name="Hume J."/>
            <person name="Morgan M.B."/>
            <person name="Miner G."/>
            <person name="Hamilton C."/>
            <person name="Huang Y."/>
            <person name="Waldron L."/>
            <person name="Verduzco D."/>
            <person name="Clerc-Blankenburg K.P."/>
            <person name="Dubchak I."/>
            <person name="Noor M.A.F."/>
            <person name="Anderson W."/>
            <person name="White K.P."/>
            <person name="Clark A.G."/>
            <person name="Schaeffer S.W."/>
            <person name="Gelbart W.M."/>
            <person name="Weinstock G.M."/>
            <person name="Gibbs R.A."/>
        </authorList>
    </citation>
    <scope>NUCLEOTIDE SEQUENCE [LARGE SCALE GENOMIC DNA]</scope>
    <source>
        <strain>MV2-25 / Tucson 14011-0121.94</strain>
    </source>
</reference>
<protein>
    <recommendedName>
        <fullName evidence="1">Protein hedgehog</fullName>
        <ecNumber evidence="3">3.1.-.-</ecNumber>
    </recommendedName>
    <component>
        <recommendedName>
            <fullName evidence="1">Protein hedgehog N-product</fullName>
        </recommendedName>
    </component>
</protein>
<dbReference type="EC" id="3.1.-.-" evidence="3"/>
<dbReference type="EMBL" id="CH676084">
    <property type="protein sequence ID" value="EDY71847.1"/>
    <property type="molecule type" value="Genomic_DNA"/>
</dbReference>
<dbReference type="EMBL" id="CM000070">
    <property type="protein sequence ID" value="EAL27441.2"/>
    <property type="molecule type" value="Genomic_DNA"/>
</dbReference>
<dbReference type="RefSeq" id="XP_002136818.1">
    <property type="nucleotide sequence ID" value="XM_002136782.2"/>
</dbReference>
<dbReference type="SMR" id="Q29AA9"/>
<dbReference type="FunCoup" id="Q29AA9">
    <property type="interactions" value="39"/>
</dbReference>
<dbReference type="STRING" id="46245.Q29AA9"/>
<dbReference type="MEROPS" id="C46.001"/>
<dbReference type="EnsemblMetazoa" id="FBtr0283937">
    <property type="protein sequence ID" value="FBpp0282375"/>
    <property type="gene ID" value="FBgn0078326"/>
</dbReference>
<dbReference type="EnsemblMetazoa" id="FBtr0289638">
    <property type="protein sequence ID" value="FBpp0288076"/>
    <property type="gene ID" value="FBgn0250482"/>
</dbReference>
<dbReference type="GeneID" id="4801169"/>
<dbReference type="KEGG" id="dpo:4801169"/>
<dbReference type="CTD" id="42737"/>
<dbReference type="eggNOG" id="KOG3638">
    <property type="taxonomic scope" value="Eukaryota"/>
</dbReference>
<dbReference type="HOGENOM" id="CLU_034686_0_0_1"/>
<dbReference type="InParanoid" id="Q29AA9"/>
<dbReference type="OMA" id="HWVSSLL"/>
<dbReference type="Proteomes" id="UP000001819">
    <property type="component" value="Chromosome 2"/>
</dbReference>
<dbReference type="Bgee" id="FBgn0078326">
    <property type="expression patterns" value="Expressed in male reproductive system and 1 other cell type or tissue"/>
</dbReference>
<dbReference type="GO" id="GO:0005737">
    <property type="term" value="C:cytoplasm"/>
    <property type="evidence" value="ECO:0007669"/>
    <property type="project" value="UniProtKB-SubCell"/>
</dbReference>
<dbReference type="GO" id="GO:0005615">
    <property type="term" value="C:extracellular space"/>
    <property type="evidence" value="ECO:0007669"/>
    <property type="project" value="TreeGrafter"/>
</dbReference>
<dbReference type="GO" id="GO:0005634">
    <property type="term" value="C:nucleus"/>
    <property type="evidence" value="ECO:0007669"/>
    <property type="project" value="UniProtKB-SubCell"/>
</dbReference>
<dbReference type="GO" id="GO:0005886">
    <property type="term" value="C:plasma membrane"/>
    <property type="evidence" value="ECO:0007669"/>
    <property type="project" value="UniProtKB-SubCell"/>
</dbReference>
<dbReference type="GO" id="GO:0005509">
    <property type="term" value="F:calcium ion binding"/>
    <property type="evidence" value="ECO:0007669"/>
    <property type="project" value="TreeGrafter"/>
</dbReference>
<dbReference type="GO" id="GO:0140853">
    <property type="term" value="F:cholesterol-protein transferase activity"/>
    <property type="evidence" value="ECO:0000250"/>
    <property type="project" value="UniProtKB"/>
</dbReference>
<dbReference type="GO" id="GO:0016015">
    <property type="term" value="F:morphogen activity"/>
    <property type="evidence" value="ECO:0007669"/>
    <property type="project" value="UniProtKB-KW"/>
</dbReference>
<dbReference type="GO" id="GO:0005113">
    <property type="term" value="F:patched binding"/>
    <property type="evidence" value="ECO:0007669"/>
    <property type="project" value="TreeGrafter"/>
</dbReference>
<dbReference type="GO" id="GO:0008233">
    <property type="term" value="F:peptidase activity"/>
    <property type="evidence" value="ECO:0000250"/>
    <property type="project" value="UniProtKB"/>
</dbReference>
<dbReference type="GO" id="GO:0009653">
    <property type="term" value="P:anatomical structure morphogenesis"/>
    <property type="evidence" value="ECO:0007669"/>
    <property type="project" value="UniProtKB-KW"/>
</dbReference>
<dbReference type="GO" id="GO:0001708">
    <property type="term" value="P:cell fate specification"/>
    <property type="evidence" value="ECO:0007669"/>
    <property type="project" value="TreeGrafter"/>
</dbReference>
<dbReference type="GO" id="GO:0007267">
    <property type="term" value="P:cell-cell signaling"/>
    <property type="evidence" value="ECO:0007669"/>
    <property type="project" value="InterPro"/>
</dbReference>
<dbReference type="GO" id="GO:0016539">
    <property type="term" value="P:intein-mediated protein splicing"/>
    <property type="evidence" value="ECO:0007669"/>
    <property type="project" value="InterPro"/>
</dbReference>
<dbReference type="GO" id="GO:0016540">
    <property type="term" value="P:protein autoprocessing"/>
    <property type="evidence" value="ECO:0007669"/>
    <property type="project" value="InterPro"/>
</dbReference>
<dbReference type="GO" id="GO:0010468">
    <property type="term" value="P:regulation of gene expression"/>
    <property type="evidence" value="ECO:0007669"/>
    <property type="project" value="TreeGrafter"/>
</dbReference>
<dbReference type="GO" id="GO:0007367">
    <property type="term" value="P:segment polarity determination"/>
    <property type="evidence" value="ECO:0000250"/>
    <property type="project" value="UniProtKB"/>
</dbReference>
<dbReference type="GO" id="GO:0097264">
    <property type="term" value="P:self proteolysis"/>
    <property type="evidence" value="ECO:0000250"/>
    <property type="project" value="UniProtKB"/>
</dbReference>
<dbReference type="GO" id="GO:0007224">
    <property type="term" value="P:smoothened signaling pathway"/>
    <property type="evidence" value="ECO:0007669"/>
    <property type="project" value="TreeGrafter"/>
</dbReference>
<dbReference type="GO" id="GO:0048731">
    <property type="term" value="P:system development"/>
    <property type="evidence" value="ECO:0007669"/>
    <property type="project" value="UniProtKB-ARBA"/>
</dbReference>
<dbReference type="CDD" id="cd00081">
    <property type="entry name" value="Hint"/>
    <property type="match status" value="1"/>
</dbReference>
<dbReference type="FunFam" id="2.170.16.10:FF:000001">
    <property type="entry name" value="Indian hedgehog"/>
    <property type="match status" value="1"/>
</dbReference>
<dbReference type="FunFam" id="3.30.1380.10:FF:000001">
    <property type="entry name" value="Indian hedgehog"/>
    <property type="match status" value="1"/>
</dbReference>
<dbReference type="Gene3D" id="3.30.1380.10">
    <property type="match status" value="1"/>
</dbReference>
<dbReference type="Gene3D" id="2.170.16.10">
    <property type="entry name" value="Hedgehog/Intein (Hint) domain"/>
    <property type="match status" value="1"/>
</dbReference>
<dbReference type="InterPro" id="IPR001657">
    <property type="entry name" value="Hedgehog"/>
</dbReference>
<dbReference type="InterPro" id="IPR001767">
    <property type="entry name" value="Hedgehog_Hint"/>
</dbReference>
<dbReference type="InterPro" id="IPR009045">
    <property type="entry name" value="Hedgehog_sig/DD-Pept_Zn-bd_sf"/>
</dbReference>
<dbReference type="InterPro" id="IPR050387">
    <property type="entry name" value="Hedgehog_Signaling"/>
</dbReference>
<dbReference type="InterPro" id="IPR000320">
    <property type="entry name" value="Hedgehog_signalling_dom"/>
</dbReference>
<dbReference type="InterPro" id="IPR003586">
    <property type="entry name" value="Hint_dom_C"/>
</dbReference>
<dbReference type="InterPro" id="IPR003587">
    <property type="entry name" value="Hint_dom_N"/>
</dbReference>
<dbReference type="InterPro" id="IPR036844">
    <property type="entry name" value="Hint_dom_sf"/>
</dbReference>
<dbReference type="InterPro" id="IPR006141">
    <property type="entry name" value="Intein_N"/>
</dbReference>
<dbReference type="PANTHER" id="PTHR11889">
    <property type="entry name" value="HEDGEHOG"/>
    <property type="match status" value="1"/>
</dbReference>
<dbReference type="PANTHER" id="PTHR11889:SF31">
    <property type="entry name" value="PROTEIN HEDGEHOG"/>
    <property type="match status" value="1"/>
</dbReference>
<dbReference type="Pfam" id="PF01085">
    <property type="entry name" value="HH_signal"/>
    <property type="match status" value="1"/>
</dbReference>
<dbReference type="Pfam" id="PF01079">
    <property type="entry name" value="Hint"/>
    <property type="match status" value="1"/>
</dbReference>
<dbReference type="PIRSF" id="PIRSF009400">
    <property type="entry name" value="Peptidase_C46"/>
    <property type="match status" value="1"/>
</dbReference>
<dbReference type="PRINTS" id="PR00632">
    <property type="entry name" value="SONICHHOG"/>
</dbReference>
<dbReference type="SMART" id="SM00305">
    <property type="entry name" value="HintC"/>
    <property type="match status" value="1"/>
</dbReference>
<dbReference type="SMART" id="SM00306">
    <property type="entry name" value="HintN"/>
    <property type="match status" value="1"/>
</dbReference>
<dbReference type="SUPFAM" id="SSF55166">
    <property type="entry name" value="Hedgehog/DD-peptidase"/>
    <property type="match status" value="1"/>
</dbReference>
<dbReference type="SUPFAM" id="SSF51294">
    <property type="entry name" value="Hedgehog/intein (Hint) domain"/>
    <property type="match status" value="1"/>
</dbReference>
<dbReference type="PROSITE" id="PS50817">
    <property type="entry name" value="INTEIN_N_TER"/>
    <property type="match status" value="1"/>
</dbReference>
<organism>
    <name type="scientific">Drosophila pseudoobscura pseudoobscura</name>
    <name type="common">Fruit fly</name>
    <dbReference type="NCBI Taxonomy" id="46245"/>
    <lineage>
        <taxon>Eukaryota</taxon>
        <taxon>Metazoa</taxon>
        <taxon>Ecdysozoa</taxon>
        <taxon>Arthropoda</taxon>
        <taxon>Hexapoda</taxon>
        <taxon>Insecta</taxon>
        <taxon>Pterygota</taxon>
        <taxon>Neoptera</taxon>
        <taxon>Endopterygota</taxon>
        <taxon>Diptera</taxon>
        <taxon>Brachycera</taxon>
        <taxon>Muscomorpha</taxon>
        <taxon>Ephydroidea</taxon>
        <taxon>Drosophilidae</taxon>
        <taxon>Drosophila</taxon>
        <taxon>Sophophora</taxon>
    </lineage>
</organism>
<feature type="signal peptide" evidence="4">
    <location>
        <begin position="1"/>
        <end status="unknown"/>
    </location>
</feature>
<feature type="propeptide" id="PRO_0000383070" evidence="4">
    <location>
        <begin status="unknown"/>
        <end position="92"/>
    </location>
</feature>
<feature type="chain" id="PRO_0000383071" description="Protein hedgehog" evidence="1">
    <location>
        <begin position="93"/>
        <end position="481"/>
    </location>
</feature>
<feature type="chain" id="PRO_0000383072" description="Protein hedgehog N-product" evidence="1">
    <location>
        <begin position="93"/>
        <end position="265"/>
    </location>
</feature>
<feature type="binding site" evidence="2">
    <location>
        <position position="157"/>
    </location>
    <ligand>
        <name>Ca(2+)</name>
        <dbReference type="ChEBI" id="CHEBI:29108"/>
        <label>1</label>
    </ligand>
</feature>
<feature type="binding site" evidence="2">
    <location>
        <position position="158"/>
    </location>
    <ligand>
        <name>Ca(2+)</name>
        <dbReference type="ChEBI" id="CHEBI:29108"/>
        <label>1</label>
    </ligand>
</feature>
<feature type="binding site" evidence="2">
    <location>
        <position position="158"/>
    </location>
    <ligand>
        <name>Ca(2+)</name>
        <dbReference type="ChEBI" id="CHEBI:29108"/>
        <label>2</label>
    </ligand>
</feature>
<feature type="binding site" evidence="2">
    <location>
        <position position="163"/>
    </location>
    <ligand>
        <name>Ca(2+)</name>
        <dbReference type="ChEBI" id="CHEBI:29108"/>
        <label>1</label>
    </ligand>
</feature>
<feature type="binding site" evidence="2">
    <location>
        <position position="193"/>
    </location>
    <ligand>
        <name>Ca(2+)</name>
        <dbReference type="ChEBI" id="CHEBI:29108"/>
        <label>1</label>
    </ligand>
</feature>
<feature type="binding site" evidence="2">
    <location>
        <position position="194"/>
    </location>
    <ligand>
        <name>Ca(2+)</name>
        <dbReference type="ChEBI" id="CHEBI:29108"/>
        <label>1</label>
    </ligand>
</feature>
<feature type="binding site" evidence="2">
    <location>
        <position position="194"/>
    </location>
    <ligand>
        <name>Ca(2+)</name>
        <dbReference type="ChEBI" id="CHEBI:29108"/>
        <label>2</label>
    </ligand>
</feature>
<feature type="binding site" evidence="2">
    <location>
        <position position="197"/>
    </location>
    <ligand>
        <name>Ca(2+)</name>
        <dbReference type="ChEBI" id="CHEBI:29108"/>
        <label>2</label>
    </ligand>
</feature>
<feature type="binding site" evidence="2">
    <location>
        <position position="199"/>
    </location>
    <ligand>
        <name>Ca(2+)</name>
        <dbReference type="ChEBI" id="CHEBI:29108"/>
        <label>2</label>
    </ligand>
</feature>
<feature type="site" description="Cleavage; by autolysis" evidence="1">
    <location>
        <begin position="265"/>
        <end position="266"/>
    </location>
</feature>
<feature type="site" description="Involved in cholesterol transfer" evidence="1">
    <location>
        <position position="311"/>
    </location>
</feature>
<feature type="site" description="Involved in auto-cleavage" evidence="1">
    <location>
        <position position="334"/>
    </location>
</feature>
<feature type="site" description="Essential for auto-cleavage" evidence="1">
    <location>
        <position position="337"/>
    </location>
</feature>
<feature type="lipid moiety-binding region" description="N-palmitoyl cysteine" evidence="1">
    <location>
        <position position="93"/>
    </location>
</feature>
<feature type="lipid moiety-binding region" description="Cholesterol glycine ester" evidence="1">
    <location>
        <position position="265"/>
    </location>
</feature>
<sequence>MDNHNEVPMSMSVPWASAASVTCLSLDAKCHRPCPSSISASASASACASDSAAIATTKLRHIAYTQRCSSRLTMLMTVLLLLLPLSFTPAHSCGPGRGLGRRRERNLYPLVLKQTIPNLSEYQTGASGPLEGEIKRDSPKFKDLVPNYNRDILFRDEEGTGADRLMTKRCKEKLNVLAYSVMNEWPGVRLLVTESWDEDHQHGQESLHYEGRAVTIATSDREPSRYGMLARLAVEAGFDWVSYVSRRHIYCSVKSDSSISSHVHGCFTPESTALLESGITKPLSEISIGDRVLSMGSNGQPVYSEVILFMDRNLEQMQNFVELHTDGGAVLTVTPAHLISVWHPERQQLDYVFADRVEELNYVLVRDPQTGELRPQRVVRVGSVRSKGVVAPLTREGTIVVNSVAASCYAVIDSQSLAHWGLAPMRILAMLQSWMPAKDQLRSSQTEGVVSRAEQQNGIHWYANALYKVKDYVLPKSWRHD</sequence>
<keyword id="KW-0068">Autocatalytic cleavage</keyword>
<keyword id="KW-0106">Calcium</keyword>
<keyword id="KW-1003">Cell membrane</keyword>
<keyword id="KW-0963">Cytoplasm</keyword>
<keyword id="KW-0217">Developmental protein</keyword>
<keyword id="KW-0378">Hydrolase</keyword>
<keyword id="KW-0449">Lipoprotein</keyword>
<keyword id="KW-0472">Membrane</keyword>
<keyword id="KW-0479">Metal-binding</keyword>
<keyword id="KW-0504">Morphogen</keyword>
<keyword id="KW-0539">Nucleus</keyword>
<keyword id="KW-0564">Palmitate</keyword>
<keyword id="KW-0645">Protease</keyword>
<keyword id="KW-1185">Reference proteome</keyword>
<keyword id="KW-0709">Segmentation polarity protein</keyword>
<keyword id="KW-0732">Signal</keyword>
<keyword id="KW-0808">Transferase</keyword>
<proteinExistence type="inferred from homology"/>
<name>HH_DROPS</name>
<comment type="function">
    <molecule>Protein hedgehog</molecule>
    <text evidence="1 3">The C-terminal part of the hedgehog protein precursor displays an autoproteolysis activity that results in the cleavage of the full-length protein into two parts (N-product and C-product) (By similarity). In addition, the C-terminal part displays a cholesterol transferase activity that results by the covalent attachment of a cholesterol moiety to the C-terminal of the newly generated N-product (By similarity). Once cleaved, the C-product has no signaling activity and diffuses from the cell (By similarity).</text>
</comment>
<comment type="function">
    <molecule>Protein hedgehog N-product</molecule>
    <text evidence="1">The dually lipidated hedgehog protein N-product is a morphogen which is essential for a variety of patterning events during development. Establishes the anterior-posterior axis of the embryonic segments and patterns the larval imaginal disks. Binds to the patched (ptc) receptor, which functions in association with smoothened (smo), to activate the transcription of target genes wingless (wg), decapentaplegic (dpp) and ptc. In the absence of hh, ptc represses the constitutive signaling activity of smo through fused (fu). Essential component of a signaling pathway which regulates the Duox-dependent gut immune response to bacterial uracil; required to activate Cad99C-dependent endosome formation, norpA-dependent Ca2+ mobilization and p38 MAPK, which are essential steps in the Duox-dependent production of reactive oxygen species (ROS) in response to intestinal bacterial infection. During photoreceptor differentiation, it up-regulates transcription of Ubr3, which in turn promotes the hh-signaling pathway by mediating the ubiquitination and degradation of cos.</text>
</comment>
<comment type="catalytic activity">
    <molecule>Protein hedgehog</molecule>
    <reaction evidence="3">
        <text>glycyl-L-cysteinyl-[protein] + cholesterol + H(+) = [protein]-C-terminal glycyl cholesterol ester + N-terminal L-cysteinyl-[protein]</text>
        <dbReference type="Rhea" id="RHEA:59504"/>
        <dbReference type="Rhea" id="RHEA-COMP:12707"/>
        <dbReference type="Rhea" id="RHEA-COMP:15369"/>
        <dbReference type="Rhea" id="RHEA-COMP:15374"/>
        <dbReference type="ChEBI" id="CHEBI:15378"/>
        <dbReference type="ChEBI" id="CHEBI:16113"/>
        <dbReference type="ChEBI" id="CHEBI:65250"/>
        <dbReference type="ChEBI" id="CHEBI:143135"/>
        <dbReference type="ChEBI" id="CHEBI:143140"/>
    </reaction>
    <physiologicalReaction direction="left-to-right" evidence="3">
        <dbReference type="Rhea" id="RHEA:59505"/>
    </physiologicalReaction>
</comment>
<comment type="subunit">
    <text evidence="1">Interacts with shf.</text>
</comment>
<comment type="subcellular location">
    <subcellularLocation>
        <location evidence="1">Nucleus</location>
    </subcellularLocation>
    <subcellularLocation>
        <location evidence="1">Cytoplasm</location>
    </subcellularLocation>
    <text evidence="1">Nuclear up to embryonic stage 10 and then at stage 11 shifts to the cytoplasm. Also secreted in either cleaved or uncleaved form to mediate signaling to other cells.</text>
</comment>
<comment type="subcellular location">
    <molecule>Protein hedgehog N-product</molecule>
    <subcellularLocation>
        <location evidence="1">Cell membrane</location>
        <topology evidence="1">Lipid-anchor</topology>
    </subcellularLocation>
    <text evidence="1">The N-terminal peptide remains associated with the cell surface. Heparan sulfate proteoglycans of the extracellular matrix play an essential role in diffusion. Lipophorin is required for diffusion, probably by acting as vehicle for its movement, explaining how it can spread over long distances despite its lipidation.</text>
</comment>
<comment type="PTM">
    <molecule>Protein hedgehog</molecule>
    <text evidence="1 2 3">The C-terminal part of the hedgehog protein precursor displays an autoproteolysis activity that results in the cleavage of the full-length protein into two parts (N-product and C-product) (By similarity). In addition, the C-terminal part displays a cholesterol transferase activity that results by the covalent attachment of a cholesterol moiety to the C-terminal of the newly generated N-product (By similarity). The N-product is the active species in both local and long-range signaling, whereas the C-product has no signaling activity (By similarity).</text>
</comment>
<comment type="PTM">
    <molecule>Protein hedgehog N-product</molecule>
    <text evidence="3">Cholesterylation is required for N-product targeting to lipid rafts and multimerization.</text>
</comment>
<comment type="PTM">
    <molecule>Protein hedgehog N-product</molecule>
    <text evidence="1">N-palmitoylation by Rasp of the hedgehog N-product, within the secretory pathway, is required for the embryonic and larval patterning activities of the hedgehog signal.</text>
</comment>
<comment type="similarity">
    <text evidence="4">Belongs to the hedgehog family.</text>
</comment>
<gene>
    <name type="primary">hh-1</name>
    <name type="ORF">GA18321</name>
</gene>
<gene>
    <name type="primary">hh-2</name>
    <name type="ORF">GA29124</name>
</gene>